<gene>
    <name evidence="1" type="primary">acsA</name>
    <name type="synonym">acs</name>
    <name type="ordered locus">SO_2743</name>
</gene>
<keyword id="KW-0007">Acetylation</keyword>
<keyword id="KW-0067">ATP-binding</keyword>
<keyword id="KW-0436">Ligase</keyword>
<keyword id="KW-0460">Magnesium</keyword>
<keyword id="KW-0479">Metal-binding</keyword>
<keyword id="KW-0547">Nucleotide-binding</keyword>
<keyword id="KW-1185">Reference proteome</keyword>
<comment type="function">
    <text evidence="1">Catalyzes the conversion of acetate into acetyl-CoA (AcCoA), an essential intermediate at the junction of anabolic and catabolic pathways. AcsA undergoes a two-step reaction. In the first half reaction, AcsA combines acetate with ATP to form acetyl-adenylate (AcAMP) intermediate. In the second half reaction, it can then transfer the acetyl group from AcAMP to the sulfhydryl group of CoA, forming the product AcCoA.</text>
</comment>
<comment type="catalytic activity">
    <reaction evidence="1">
        <text>acetate + ATP + CoA = acetyl-CoA + AMP + diphosphate</text>
        <dbReference type="Rhea" id="RHEA:23176"/>
        <dbReference type="ChEBI" id="CHEBI:30089"/>
        <dbReference type="ChEBI" id="CHEBI:30616"/>
        <dbReference type="ChEBI" id="CHEBI:33019"/>
        <dbReference type="ChEBI" id="CHEBI:57287"/>
        <dbReference type="ChEBI" id="CHEBI:57288"/>
        <dbReference type="ChEBI" id="CHEBI:456215"/>
        <dbReference type="EC" id="6.2.1.1"/>
    </reaction>
</comment>
<comment type="cofactor">
    <cofactor evidence="1">
        <name>Mg(2+)</name>
        <dbReference type="ChEBI" id="CHEBI:18420"/>
    </cofactor>
</comment>
<comment type="PTM">
    <text evidence="1">Acetylated. Deacetylation by the SIR2-homolog deacetylase activates the enzyme.</text>
</comment>
<comment type="similarity">
    <text evidence="1">Belongs to the ATP-dependent AMP-binding enzyme family.</text>
</comment>
<evidence type="ECO:0000255" key="1">
    <source>
        <dbReference type="HAMAP-Rule" id="MF_01123"/>
    </source>
</evidence>
<dbReference type="EC" id="6.2.1.1" evidence="1"/>
<dbReference type="EMBL" id="AE014299">
    <property type="protein sequence ID" value="AAN55771.1"/>
    <property type="molecule type" value="Genomic_DNA"/>
</dbReference>
<dbReference type="RefSeq" id="NP_718327.1">
    <property type="nucleotide sequence ID" value="NC_004347.2"/>
</dbReference>
<dbReference type="RefSeq" id="WP_011072682.1">
    <property type="nucleotide sequence ID" value="NC_004347.2"/>
</dbReference>
<dbReference type="SMR" id="Q8EDK3"/>
<dbReference type="STRING" id="211586.SO_2743"/>
<dbReference type="PaxDb" id="211586-SO_2743"/>
<dbReference type="KEGG" id="son:SO_2743"/>
<dbReference type="PATRIC" id="fig|211586.12.peg.2642"/>
<dbReference type="eggNOG" id="COG0365">
    <property type="taxonomic scope" value="Bacteria"/>
</dbReference>
<dbReference type="HOGENOM" id="CLU_000022_3_6_6"/>
<dbReference type="OrthoDB" id="9803968at2"/>
<dbReference type="PhylomeDB" id="Q8EDK3"/>
<dbReference type="BioCyc" id="SONE211586:G1GMP-2522-MONOMER"/>
<dbReference type="Proteomes" id="UP000008186">
    <property type="component" value="Chromosome"/>
</dbReference>
<dbReference type="GO" id="GO:0005829">
    <property type="term" value="C:cytosol"/>
    <property type="evidence" value="ECO:0000318"/>
    <property type="project" value="GO_Central"/>
</dbReference>
<dbReference type="GO" id="GO:0003987">
    <property type="term" value="F:acetate-CoA ligase activity"/>
    <property type="evidence" value="ECO:0000318"/>
    <property type="project" value="GO_Central"/>
</dbReference>
<dbReference type="GO" id="GO:0016208">
    <property type="term" value="F:AMP binding"/>
    <property type="evidence" value="ECO:0007669"/>
    <property type="project" value="InterPro"/>
</dbReference>
<dbReference type="GO" id="GO:0005524">
    <property type="term" value="F:ATP binding"/>
    <property type="evidence" value="ECO:0007669"/>
    <property type="project" value="UniProtKB-KW"/>
</dbReference>
<dbReference type="GO" id="GO:0046872">
    <property type="term" value="F:metal ion binding"/>
    <property type="evidence" value="ECO:0007669"/>
    <property type="project" value="UniProtKB-KW"/>
</dbReference>
<dbReference type="GO" id="GO:0006085">
    <property type="term" value="P:acetyl-CoA biosynthetic process"/>
    <property type="evidence" value="ECO:0000318"/>
    <property type="project" value="GO_Central"/>
</dbReference>
<dbReference type="GO" id="GO:0019427">
    <property type="term" value="P:acetyl-CoA biosynthetic process from acetate"/>
    <property type="evidence" value="ECO:0007669"/>
    <property type="project" value="InterPro"/>
</dbReference>
<dbReference type="CDD" id="cd05966">
    <property type="entry name" value="ACS"/>
    <property type="match status" value="1"/>
</dbReference>
<dbReference type="FunFam" id="3.30.300.30:FF:000004">
    <property type="entry name" value="Acetyl-coenzyme A synthetase"/>
    <property type="match status" value="1"/>
</dbReference>
<dbReference type="FunFam" id="3.40.50.12780:FF:000001">
    <property type="entry name" value="Acetyl-coenzyme A synthetase"/>
    <property type="match status" value="1"/>
</dbReference>
<dbReference type="Gene3D" id="3.30.300.30">
    <property type="match status" value="1"/>
</dbReference>
<dbReference type="Gene3D" id="3.40.50.12780">
    <property type="entry name" value="N-terminal domain of ligase-like"/>
    <property type="match status" value="1"/>
</dbReference>
<dbReference type="HAMAP" id="MF_01123">
    <property type="entry name" value="Ac_CoA_synth"/>
    <property type="match status" value="1"/>
</dbReference>
<dbReference type="InterPro" id="IPR011904">
    <property type="entry name" value="Ac_CoA_lig"/>
</dbReference>
<dbReference type="InterPro" id="IPR032387">
    <property type="entry name" value="ACAS_N"/>
</dbReference>
<dbReference type="InterPro" id="IPR025110">
    <property type="entry name" value="AMP-bd_C"/>
</dbReference>
<dbReference type="InterPro" id="IPR045851">
    <property type="entry name" value="AMP-bd_C_sf"/>
</dbReference>
<dbReference type="InterPro" id="IPR020845">
    <property type="entry name" value="AMP-binding_CS"/>
</dbReference>
<dbReference type="InterPro" id="IPR000873">
    <property type="entry name" value="AMP-dep_synth/lig_dom"/>
</dbReference>
<dbReference type="InterPro" id="IPR042099">
    <property type="entry name" value="ANL_N_sf"/>
</dbReference>
<dbReference type="NCBIfam" id="TIGR02188">
    <property type="entry name" value="Ac_CoA_lig_AcsA"/>
    <property type="match status" value="1"/>
</dbReference>
<dbReference type="NCBIfam" id="NF001208">
    <property type="entry name" value="PRK00174.1"/>
    <property type="match status" value="1"/>
</dbReference>
<dbReference type="PANTHER" id="PTHR24095">
    <property type="entry name" value="ACETYL-COENZYME A SYNTHETASE"/>
    <property type="match status" value="1"/>
</dbReference>
<dbReference type="PANTHER" id="PTHR24095:SF243">
    <property type="entry name" value="ACETYL-COENZYME A SYNTHETASE"/>
    <property type="match status" value="1"/>
</dbReference>
<dbReference type="Pfam" id="PF16177">
    <property type="entry name" value="ACAS_N"/>
    <property type="match status" value="1"/>
</dbReference>
<dbReference type="Pfam" id="PF00501">
    <property type="entry name" value="AMP-binding"/>
    <property type="match status" value="1"/>
</dbReference>
<dbReference type="Pfam" id="PF13193">
    <property type="entry name" value="AMP-binding_C"/>
    <property type="match status" value="1"/>
</dbReference>
<dbReference type="SUPFAM" id="SSF56801">
    <property type="entry name" value="Acetyl-CoA synthetase-like"/>
    <property type="match status" value="1"/>
</dbReference>
<dbReference type="PROSITE" id="PS00455">
    <property type="entry name" value="AMP_BINDING"/>
    <property type="match status" value="1"/>
</dbReference>
<name>ACSA_SHEON</name>
<proteinExistence type="inferred from homology"/>
<organism>
    <name type="scientific">Shewanella oneidensis (strain ATCC 700550 / JCM 31522 / CIP 106686 / LMG 19005 / NCIMB 14063 / MR-1)</name>
    <dbReference type="NCBI Taxonomy" id="211586"/>
    <lineage>
        <taxon>Bacteria</taxon>
        <taxon>Pseudomonadati</taxon>
        <taxon>Pseudomonadota</taxon>
        <taxon>Gammaproteobacteria</taxon>
        <taxon>Alteromonadales</taxon>
        <taxon>Shewanellaceae</taxon>
        <taxon>Shewanella</taxon>
    </lineage>
</organism>
<feature type="chain" id="PRO_0000208387" description="Acetyl-coenzyme A synthetase">
    <location>
        <begin position="1"/>
        <end position="650"/>
    </location>
</feature>
<feature type="binding site" evidence="1">
    <location>
        <begin position="191"/>
        <end position="194"/>
    </location>
    <ligand>
        <name>CoA</name>
        <dbReference type="ChEBI" id="CHEBI:57287"/>
    </ligand>
</feature>
<feature type="binding site" evidence="1">
    <location>
        <position position="311"/>
    </location>
    <ligand>
        <name>CoA</name>
        <dbReference type="ChEBI" id="CHEBI:57287"/>
    </ligand>
</feature>
<feature type="binding site" evidence="1">
    <location>
        <position position="335"/>
    </location>
    <ligand>
        <name>CoA</name>
        <dbReference type="ChEBI" id="CHEBI:57287"/>
    </ligand>
</feature>
<feature type="binding site" evidence="1">
    <location>
        <begin position="387"/>
        <end position="389"/>
    </location>
    <ligand>
        <name>ATP</name>
        <dbReference type="ChEBI" id="CHEBI:30616"/>
    </ligand>
</feature>
<feature type="binding site" evidence="1">
    <location>
        <begin position="411"/>
        <end position="416"/>
    </location>
    <ligand>
        <name>ATP</name>
        <dbReference type="ChEBI" id="CHEBI:30616"/>
    </ligand>
</feature>
<feature type="binding site" evidence="1">
    <location>
        <position position="500"/>
    </location>
    <ligand>
        <name>ATP</name>
        <dbReference type="ChEBI" id="CHEBI:30616"/>
    </ligand>
</feature>
<feature type="binding site" evidence="1">
    <location>
        <position position="515"/>
    </location>
    <ligand>
        <name>ATP</name>
        <dbReference type="ChEBI" id="CHEBI:30616"/>
    </ligand>
</feature>
<feature type="binding site" evidence="1">
    <location>
        <position position="523"/>
    </location>
    <ligand>
        <name>CoA</name>
        <dbReference type="ChEBI" id="CHEBI:57287"/>
    </ligand>
</feature>
<feature type="binding site" evidence="1">
    <location>
        <position position="526"/>
    </location>
    <ligand>
        <name>ATP</name>
        <dbReference type="ChEBI" id="CHEBI:30616"/>
    </ligand>
</feature>
<feature type="binding site" evidence="1">
    <location>
        <position position="537"/>
    </location>
    <ligand>
        <name>Mg(2+)</name>
        <dbReference type="ChEBI" id="CHEBI:18420"/>
    </ligand>
</feature>
<feature type="binding site" evidence="1">
    <location>
        <position position="539"/>
    </location>
    <ligand>
        <name>Mg(2+)</name>
        <dbReference type="ChEBI" id="CHEBI:18420"/>
    </ligand>
</feature>
<feature type="binding site" evidence="1">
    <location>
        <position position="542"/>
    </location>
    <ligand>
        <name>Mg(2+)</name>
        <dbReference type="ChEBI" id="CHEBI:18420"/>
    </ligand>
</feature>
<feature type="binding site" evidence="1">
    <location>
        <position position="584"/>
    </location>
    <ligand>
        <name>CoA</name>
        <dbReference type="ChEBI" id="CHEBI:57287"/>
    </ligand>
</feature>
<feature type="modified residue" description="N6-acetyllysine" evidence="1">
    <location>
        <position position="609"/>
    </location>
</feature>
<protein>
    <recommendedName>
        <fullName evidence="1">Acetyl-coenzyme A synthetase</fullName>
        <shortName evidence="1">AcCoA synthetase</shortName>
        <shortName evidence="1">Acs</shortName>
        <ecNumber evidence="1">6.2.1.1</ecNumber>
    </recommendedName>
    <alternativeName>
        <fullName evidence="1">Acetate--CoA ligase</fullName>
    </alternativeName>
    <alternativeName>
        <fullName evidence="1">Acyl-activating enzyme</fullName>
    </alternativeName>
</protein>
<accession>Q8EDK3</accession>
<reference key="1">
    <citation type="journal article" date="2002" name="Nat. Biotechnol.">
        <title>Genome sequence of the dissimilatory metal ion-reducing bacterium Shewanella oneidensis.</title>
        <authorList>
            <person name="Heidelberg J.F."/>
            <person name="Paulsen I.T."/>
            <person name="Nelson K.E."/>
            <person name="Gaidos E.J."/>
            <person name="Nelson W.C."/>
            <person name="Read T.D."/>
            <person name="Eisen J.A."/>
            <person name="Seshadri R."/>
            <person name="Ward N.L."/>
            <person name="Methe B.A."/>
            <person name="Clayton R.A."/>
            <person name="Meyer T."/>
            <person name="Tsapin A."/>
            <person name="Scott J."/>
            <person name="Beanan M.J."/>
            <person name="Brinkac L.M."/>
            <person name="Daugherty S.C."/>
            <person name="DeBoy R.T."/>
            <person name="Dodson R.J."/>
            <person name="Durkin A.S."/>
            <person name="Haft D.H."/>
            <person name="Kolonay J.F."/>
            <person name="Madupu R."/>
            <person name="Peterson J.D."/>
            <person name="Umayam L.A."/>
            <person name="White O."/>
            <person name="Wolf A.M."/>
            <person name="Vamathevan J.J."/>
            <person name="Weidman J.F."/>
            <person name="Impraim M."/>
            <person name="Lee K."/>
            <person name="Berry K.J."/>
            <person name="Lee C."/>
            <person name="Mueller J."/>
            <person name="Khouri H.M."/>
            <person name="Gill J."/>
            <person name="Utterback T.R."/>
            <person name="McDonald L.A."/>
            <person name="Feldblyum T.V."/>
            <person name="Smith H.O."/>
            <person name="Venter J.C."/>
            <person name="Nealson K.H."/>
            <person name="Fraser C.M."/>
        </authorList>
    </citation>
    <scope>NUCLEOTIDE SEQUENCE [LARGE SCALE GENOMIC DNA]</scope>
    <source>
        <strain>ATCC 700550 / JCM 31522 / CIP 106686 / LMG 19005 / NCIMB 14063 / MR-1</strain>
    </source>
</reference>
<sequence length="650" mass="72342">MSSQSLYKVSGNIAANALVNNDQYKTMYQESIVNPEGFWREHGKRIDWIKPYTKIKKTTFDDHNLSINWFYDGTLNASANCLDRHLAAHSDRVAIIWEGDNANEQRKITYGELHTQVCKFANALRSQGVRRGDIVTIYMPMVPEAAVAMLACARIGAVHSVVFGGFSPDSIASRVIDGKSKIVITSDEGMRGGRAIPLKRNIDDALKHPDVTSVEKVIVLKRTGGKIDWVEGRDVWWHSLVETASEHCAVEEMGAEDPLFLLYTSGSTGNPKGVLHTTGGYMVYASMTHEYVFDYKPGEIYWCTADVGWITGHSYMVYGPLANGATVLIHEGVPNHPSPARLGEMIDRHKVNILYTAPTLIRALMAEGKQHFDKYNGSSLRIMGSVGEPINPEAWRWYHEVIGHEHCPIVDTWWQTETGGILITPLPGATDTKPGSATRPFFGVQPALVDNMGNILEGATEGNLVLLDSWPGQMRTVYGDHERFVLTYFKTFRGMYFTGDGARRDEDGYYWITGRVDDVINVSGHRLGTAEVESALVSHELVAEAAVVGYPHDIKGQGIYAYVTLTRGTEESEELRQELRQWVRKEIGALATPDLIQWATGLPKTRSGKIMRRFLRKIAANEVTNLGDASTLADPAVIETLIETRLNRNE</sequence>